<protein>
    <recommendedName>
        <fullName>ATP synthase protein 8</fullName>
    </recommendedName>
    <alternativeName>
        <fullName>A6L</fullName>
    </alternativeName>
    <alternativeName>
        <fullName>F-ATPase subunit 8</fullName>
    </alternativeName>
</protein>
<accession>A6H4Q7</accession>
<organism>
    <name type="scientific">Vanderwaltozyma polyspora (strain ATCC 22028 / DSM 70294 / BCRC 21397 / CBS 2163 / NBRC 10782 / NRRL Y-8283 / UCD 57-17)</name>
    <name type="common">Kluyveromyces polysporus</name>
    <dbReference type="NCBI Taxonomy" id="436907"/>
    <lineage>
        <taxon>Eukaryota</taxon>
        <taxon>Fungi</taxon>
        <taxon>Dikarya</taxon>
        <taxon>Ascomycota</taxon>
        <taxon>Saccharomycotina</taxon>
        <taxon>Saccharomycetes</taxon>
        <taxon>Saccharomycetales</taxon>
        <taxon>Saccharomycetaceae</taxon>
        <taxon>Vanderwaltozyma</taxon>
    </lineage>
</organism>
<reference key="1">
    <citation type="journal article" date="2007" name="Proc. Natl. Acad. Sci. U.S.A.">
        <title>Independent sorting-out of thousands of duplicated gene pairs in two yeast species descended from a whole-genome duplication.</title>
        <authorList>
            <person name="Scannell D.R."/>
            <person name="Frank A.C."/>
            <person name="Conant G.C."/>
            <person name="Byrne K.P."/>
            <person name="Woolfit M."/>
            <person name="Wolfe K.H."/>
        </authorList>
    </citation>
    <scope>NUCLEOTIDE SEQUENCE [LARGE SCALE GENOMIC DNA]</scope>
    <source>
        <strain>ATCC 22028 / DSM 70294 / BCRC 21397 / CBS 2163 / NBRC 10782 / NRRL Y-8283 / UCD 57-17</strain>
    </source>
</reference>
<comment type="function">
    <text evidence="1">Mitochondrial membrane ATP synthase (F(1)F(0) ATP synthase or Complex V) produces ATP from ADP in the presence of a proton gradient across the membrane which is generated by electron transport complexes of the respiratory chain. F-type ATPases consist of two structural domains, F(1) - containing the extramembraneous catalytic core and F(0) - containing the membrane proton channel, linked together by a central stalk and a peripheral stalk. During catalysis, ATP synthesis in the catalytic domain of F(1) is coupled via a rotary mechanism of the central stalk subunits to proton translocation. Part of the complex F(0) domain. Minor subunit located with subunit a in the membrane (By similarity).</text>
</comment>
<comment type="subunit">
    <text evidence="1">F-type ATPases have 2 components, CF(1) - the catalytic core - and CF(0) - the membrane proton channel.</text>
</comment>
<comment type="subcellular location">
    <subcellularLocation>
        <location>Mitochondrion membrane</location>
        <topology>Single-pass membrane protein</topology>
    </subcellularLocation>
</comment>
<comment type="similarity">
    <text evidence="3">Belongs to the ATPase protein 8 family.</text>
</comment>
<keyword id="KW-0066">ATP synthesis</keyword>
<keyword id="KW-0138">CF(0)</keyword>
<keyword id="KW-0375">Hydrogen ion transport</keyword>
<keyword id="KW-0406">Ion transport</keyword>
<keyword id="KW-0472">Membrane</keyword>
<keyword id="KW-0496">Mitochondrion</keyword>
<keyword id="KW-1185">Reference proteome</keyword>
<keyword id="KW-0812">Transmembrane</keyword>
<keyword id="KW-1133">Transmembrane helix</keyword>
<keyword id="KW-0813">Transport</keyword>
<gene>
    <name type="primary">ATP8</name>
    <name type="ORF">VapofMp07</name>
</gene>
<dbReference type="EMBL" id="AM698041">
    <property type="protein sequence ID" value="CAN85580.1"/>
    <property type="molecule type" value="Genomic_DNA"/>
</dbReference>
<dbReference type="RefSeq" id="YP_001331019.1">
    <property type="nucleotide sequence ID" value="NC_009638.1"/>
</dbReference>
<dbReference type="SMR" id="A6H4Q7"/>
<dbReference type="FunCoup" id="A6H4Q7">
    <property type="interactions" value="117"/>
</dbReference>
<dbReference type="STRING" id="436907.A6H4Q7"/>
<dbReference type="KEGG" id="vpo:VapofMp07"/>
<dbReference type="InParanoid" id="A6H4Q7"/>
<dbReference type="Proteomes" id="UP000000267">
    <property type="component" value="Mitochondrion"/>
</dbReference>
<dbReference type="GO" id="GO:0031966">
    <property type="term" value="C:mitochondrial membrane"/>
    <property type="evidence" value="ECO:0007669"/>
    <property type="project" value="UniProtKB-SubCell"/>
</dbReference>
<dbReference type="GO" id="GO:0045259">
    <property type="term" value="C:proton-transporting ATP synthase complex"/>
    <property type="evidence" value="ECO:0007669"/>
    <property type="project" value="UniProtKB-KW"/>
</dbReference>
<dbReference type="GO" id="GO:0046933">
    <property type="term" value="F:proton-transporting ATP synthase activity, rotational mechanism"/>
    <property type="evidence" value="ECO:0007669"/>
    <property type="project" value="TreeGrafter"/>
</dbReference>
<dbReference type="InterPro" id="IPR009230">
    <property type="entry name" value="ATP_synth_su8_fun"/>
</dbReference>
<dbReference type="PANTHER" id="PTHR36101">
    <property type="entry name" value="ATP SYNTHASE PROTEIN 8"/>
    <property type="match status" value="1"/>
</dbReference>
<dbReference type="PANTHER" id="PTHR36101:SF1">
    <property type="entry name" value="ATP SYNTHASE PROTEIN 8"/>
    <property type="match status" value="1"/>
</dbReference>
<dbReference type="Pfam" id="PF05933">
    <property type="entry name" value="Fun_ATP-synt_8"/>
    <property type="match status" value="1"/>
</dbReference>
<geneLocation type="mitochondrion"/>
<proteinExistence type="inferred from homology"/>
<name>ATP8_VANPO</name>
<sequence>MPQLIPFYFLNQLTYGFLLMTILLVLFSQFFLPMILRLYLTRLFISKL</sequence>
<feature type="chain" id="PRO_0000356861" description="ATP synthase protein 8">
    <location>
        <begin position="1"/>
        <end position="48"/>
    </location>
</feature>
<feature type="transmembrane region" description="Helical" evidence="2">
    <location>
        <begin position="16"/>
        <end position="36"/>
    </location>
</feature>
<evidence type="ECO:0000250" key="1"/>
<evidence type="ECO:0000255" key="2"/>
<evidence type="ECO:0000305" key="3"/>